<accession>O58211</accession>
<name>NADM_PYRHO</name>
<evidence type="ECO:0000250" key="1"/>
<evidence type="ECO:0000305" key="2"/>
<sequence length="186" mass="21392">MIRGLFVGRFQPVHKGHIKALEFVFSQVDEVIIGIGSAQASHTLKNPFTTGERMEMLIRALEEAGFDKRYYLIPLPDINFNAIWVPYVESMVPRFHVVFTGNSLVAQLFKERGYKVVVQPMFKKDILSATEIRRRMIAGEPWEDLVPKSVVEYIKEIKGVERLRNLATNLESSEKELQAPIRVPEY</sequence>
<comment type="catalytic activity">
    <reaction>
        <text>beta-nicotinamide D-ribonucleotide + ATP + H(+) = diphosphate + NAD(+)</text>
        <dbReference type="Rhea" id="RHEA:21360"/>
        <dbReference type="ChEBI" id="CHEBI:14649"/>
        <dbReference type="ChEBI" id="CHEBI:15378"/>
        <dbReference type="ChEBI" id="CHEBI:30616"/>
        <dbReference type="ChEBI" id="CHEBI:33019"/>
        <dbReference type="ChEBI" id="CHEBI:57540"/>
        <dbReference type="EC" id="2.7.7.1"/>
    </reaction>
</comment>
<comment type="pathway">
    <text>Cofactor biosynthesis; NAD(+) biosynthesis; NAD(+) from nicotinamide D-ribonucleotide: step 1/1.</text>
</comment>
<comment type="subcellular location">
    <subcellularLocation>
        <location evidence="1">Cytoplasm</location>
    </subcellularLocation>
</comment>
<comment type="similarity">
    <text evidence="2">Belongs to the archaeal NMN adenylyltransferase family.</text>
</comment>
<gene>
    <name type="ordered locus">PH0464</name>
</gene>
<reference key="1">
    <citation type="journal article" date="1998" name="DNA Res.">
        <title>Complete sequence and gene organization of the genome of a hyper-thermophilic archaebacterium, Pyrococcus horikoshii OT3.</title>
        <authorList>
            <person name="Kawarabayasi Y."/>
            <person name="Sawada M."/>
            <person name="Horikawa H."/>
            <person name="Haikawa Y."/>
            <person name="Hino Y."/>
            <person name="Yamamoto S."/>
            <person name="Sekine M."/>
            <person name="Baba S."/>
            <person name="Kosugi H."/>
            <person name="Hosoyama A."/>
            <person name="Nagai Y."/>
            <person name="Sakai M."/>
            <person name="Ogura K."/>
            <person name="Otsuka R."/>
            <person name="Nakazawa H."/>
            <person name="Takamiya M."/>
            <person name="Ohfuku Y."/>
            <person name="Funahashi T."/>
            <person name="Tanaka T."/>
            <person name="Kudoh Y."/>
            <person name="Yamazaki J."/>
            <person name="Kushida N."/>
            <person name="Oguchi A."/>
            <person name="Aoki K."/>
            <person name="Yoshizawa T."/>
            <person name="Nakamura Y."/>
            <person name="Robb F.T."/>
            <person name="Horikoshi K."/>
            <person name="Masuchi Y."/>
            <person name="Shizuya H."/>
            <person name="Kikuchi H."/>
        </authorList>
    </citation>
    <scope>NUCLEOTIDE SEQUENCE [LARGE SCALE GENOMIC DNA]</scope>
    <source>
        <strain>ATCC 700860 / DSM 12428 / JCM 9974 / NBRC 100139 / OT-3</strain>
    </source>
</reference>
<organism>
    <name type="scientific">Pyrococcus horikoshii (strain ATCC 700860 / DSM 12428 / JCM 9974 / NBRC 100139 / OT-3)</name>
    <dbReference type="NCBI Taxonomy" id="70601"/>
    <lineage>
        <taxon>Archaea</taxon>
        <taxon>Methanobacteriati</taxon>
        <taxon>Methanobacteriota</taxon>
        <taxon>Thermococci</taxon>
        <taxon>Thermococcales</taxon>
        <taxon>Thermococcaceae</taxon>
        <taxon>Pyrococcus</taxon>
    </lineage>
</organism>
<dbReference type="EC" id="2.7.7.1"/>
<dbReference type="EMBL" id="BA000001">
    <property type="protein sequence ID" value="BAA29550.1"/>
    <property type="molecule type" value="Genomic_DNA"/>
</dbReference>
<dbReference type="PIR" id="A71158">
    <property type="entry name" value="A71158"/>
</dbReference>
<dbReference type="RefSeq" id="WP_010884571.1">
    <property type="nucleotide sequence ID" value="NC_000961.1"/>
</dbReference>
<dbReference type="SMR" id="O58211"/>
<dbReference type="STRING" id="70601.gene:9377395"/>
<dbReference type="EnsemblBacteria" id="BAA29550">
    <property type="protein sequence ID" value="BAA29550"/>
    <property type="gene ID" value="BAA29550"/>
</dbReference>
<dbReference type="GeneID" id="1444358"/>
<dbReference type="KEGG" id="pho:PH0464"/>
<dbReference type="eggNOG" id="arCOG00972">
    <property type="taxonomic scope" value="Archaea"/>
</dbReference>
<dbReference type="OrthoDB" id="264480at2157"/>
<dbReference type="UniPathway" id="UPA00253">
    <property type="reaction ID" value="UER00600"/>
</dbReference>
<dbReference type="Proteomes" id="UP000000752">
    <property type="component" value="Chromosome"/>
</dbReference>
<dbReference type="GO" id="GO:0005737">
    <property type="term" value="C:cytoplasm"/>
    <property type="evidence" value="ECO:0007669"/>
    <property type="project" value="UniProtKB-SubCell"/>
</dbReference>
<dbReference type="GO" id="GO:0005524">
    <property type="term" value="F:ATP binding"/>
    <property type="evidence" value="ECO:0007669"/>
    <property type="project" value="UniProtKB-KW"/>
</dbReference>
<dbReference type="GO" id="GO:0000309">
    <property type="term" value="F:nicotinamide-nucleotide adenylyltransferase activity"/>
    <property type="evidence" value="ECO:0007669"/>
    <property type="project" value="UniProtKB-UniRule"/>
</dbReference>
<dbReference type="GO" id="GO:0009435">
    <property type="term" value="P:NAD biosynthetic process"/>
    <property type="evidence" value="ECO:0007669"/>
    <property type="project" value="UniProtKB-UniRule"/>
</dbReference>
<dbReference type="CDD" id="cd02166">
    <property type="entry name" value="NMNAT_Archaea"/>
    <property type="match status" value="1"/>
</dbReference>
<dbReference type="Gene3D" id="3.40.50.620">
    <property type="entry name" value="HUPs"/>
    <property type="match status" value="1"/>
</dbReference>
<dbReference type="HAMAP" id="MF_00243">
    <property type="entry name" value="NMN_adenylyltr"/>
    <property type="match status" value="1"/>
</dbReference>
<dbReference type="InterPro" id="IPR004821">
    <property type="entry name" value="Cyt_trans-like"/>
</dbReference>
<dbReference type="InterPro" id="IPR006418">
    <property type="entry name" value="NMN_Atrans_arc"/>
</dbReference>
<dbReference type="InterPro" id="IPR014729">
    <property type="entry name" value="Rossmann-like_a/b/a_fold"/>
</dbReference>
<dbReference type="NCBIfam" id="TIGR01527">
    <property type="entry name" value="arch_NMN_Atrans"/>
    <property type="match status" value="1"/>
</dbReference>
<dbReference type="NCBIfam" id="TIGR00125">
    <property type="entry name" value="cyt_tran_rel"/>
    <property type="match status" value="1"/>
</dbReference>
<dbReference type="NCBIfam" id="NF002243">
    <property type="entry name" value="PRK01153.1"/>
    <property type="match status" value="1"/>
</dbReference>
<dbReference type="PANTHER" id="PTHR21342:SF0">
    <property type="entry name" value="BIFUNCTIONAL NMN ADENYLYLTRANSFERASE_NUDIX HYDROLASE"/>
    <property type="match status" value="1"/>
</dbReference>
<dbReference type="PANTHER" id="PTHR21342">
    <property type="entry name" value="PHOSPHOPANTETHEINE ADENYLYLTRANSFERASE"/>
    <property type="match status" value="1"/>
</dbReference>
<dbReference type="Pfam" id="PF01467">
    <property type="entry name" value="CTP_transf_like"/>
    <property type="match status" value="1"/>
</dbReference>
<dbReference type="SUPFAM" id="SSF52374">
    <property type="entry name" value="Nucleotidylyl transferase"/>
    <property type="match status" value="1"/>
</dbReference>
<proteinExistence type="inferred from homology"/>
<keyword id="KW-0067">ATP-binding</keyword>
<keyword id="KW-0963">Cytoplasm</keyword>
<keyword id="KW-0520">NAD</keyword>
<keyword id="KW-0547">Nucleotide-binding</keyword>
<keyword id="KW-0548">Nucleotidyltransferase</keyword>
<keyword id="KW-0662">Pyridine nucleotide biosynthesis</keyword>
<keyword id="KW-0808">Transferase</keyword>
<feature type="chain" id="PRO_0000135001" description="Nicotinamide-nucleotide adenylyltransferase">
    <location>
        <begin position="1"/>
        <end position="186"/>
    </location>
</feature>
<protein>
    <recommendedName>
        <fullName>Nicotinamide-nucleotide adenylyltransferase</fullName>
        <ecNumber>2.7.7.1</ecNumber>
    </recommendedName>
    <alternativeName>
        <fullName>NAD(+) diphosphorylase</fullName>
    </alternativeName>
    <alternativeName>
        <fullName>NAD(+) pyrophosphorylase</fullName>
    </alternativeName>
    <alternativeName>
        <fullName>NMN adenylyltransferase</fullName>
    </alternativeName>
</protein>